<evidence type="ECO:0000255" key="1"/>
<evidence type="ECO:0000305" key="2"/>
<organism>
    <name type="scientific">Pasteurella multocida (strain Pm70)</name>
    <dbReference type="NCBI Taxonomy" id="272843"/>
    <lineage>
        <taxon>Bacteria</taxon>
        <taxon>Pseudomonadati</taxon>
        <taxon>Pseudomonadota</taxon>
        <taxon>Gammaproteobacteria</taxon>
        <taxon>Pasteurellales</taxon>
        <taxon>Pasteurellaceae</taxon>
        <taxon>Pasteurella</taxon>
    </lineage>
</organism>
<keyword id="KW-0472">Membrane</keyword>
<keyword id="KW-1185">Reference proteome</keyword>
<keyword id="KW-0812">Transmembrane</keyword>
<keyword id="KW-1133">Transmembrane helix</keyword>
<reference key="1">
    <citation type="journal article" date="2001" name="Proc. Natl. Acad. Sci. U.S.A.">
        <title>Complete genomic sequence of Pasteurella multocida Pm70.</title>
        <authorList>
            <person name="May B.J."/>
            <person name="Zhang Q."/>
            <person name="Li L.L."/>
            <person name="Paustian M.L."/>
            <person name="Whittam T.S."/>
            <person name="Kapur V."/>
        </authorList>
    </citation>
    <scope>NUCLEOTIDE SEQUENCE [LARGE SCALE GENOMIC DNA]</scope>
    <source>
        <strain>Pm70</strain>
    </source>
</reference>
<proteinExistence type="predicted"/>
<gene>
    <name type="ordered locus">PM1386</name>
</gene>
<name>Y1386_PASMU</name>
<dbReference type="EMBL" id="AE004439">
    <property type="protein sequence ID" value="AAK03470.1"/>
    <property type="molecule type" value="Genomic_DNA"/>
</dbReference>
<dbReference type="STRING" id="272843.PM1386"/>
<dbReference type="EnsemblBacteria" id="AAK03470">
    <property type="protein sequence ID" value="AAK03470"/>
    <property type="gene ID" value="PM1386"/>
</dbReference>
<dbReference type="KEGG" id="pmu:PM1386"/>
<dbReference type="HOGENOM" id="CLU_2143453_0_0_6"/>
<dbReference type="Proteomes" id="UP000000809">
    <property type="component" value="Chromosome"/>
</dbReference>
<dbReference type="GO" id="GO:0016020">
    <property type="term" value="C:membrane"/>
    <property type="evidence" value="ECO:0007669"/>
    <property type="project" value="UniProtKB-SubCell"/>
</dbReference>
<accession>Q9CL57</accession>
<protein>
    <recommendedName>
        <fullName>Uncharacterized protein PM1386</fullName>
    </recommendedName>
</protein>
<comment type="subcellular location">
    <subcellularLocation>
        <location evidence="2">Membrane</location>
        <topology evidence="2">Single-pass membrane protein</topology>
    </subcellularLocation>
</comment>
<sequence>MAQGYAWFCCASNSSTRFSNATNFSRVRINTCVCTSNSSRVTKSSFANCACNVCLSLASASCPKSLIPCGRESWICCITCSIFFGFSIIASYFLKFHLLYVILLQIKTFFRD</sequence>
<feature type="chain" id="PRO_0000216323" description="Uncharacterized protein PM1386">
    <location>
        <begin position="1"/>
        <end position="112"/>
    </location>
</feature>
<feature type="transmembrane region" description="Helical" evidence="1">
    <location>
        <begin position="82"/>
        <end position="104"/>
    </location>
</feature>